<feature type="chain" id="PRO_1000003437" description="Small ribosomal subunit protein bS18">
    <location>
        <begin position="1"/>
        <end position="76"/>
    </location>
</feature>
<dbReference type="EMBL" id="CP000644">
    <property type="protein sequence ID" value="ABO88870.1"/>
    <property type="molecule type" value="Genomic_DNA"/>
</dbReference>
<dbReference type="RefSeq" id="WP_005313392.1">
    <property type="nucleotide sequence ID" value="NC_009348.1"/>
</dbReference>
<dbReference type="SMR" id="A4SIZ8"/>
<dbReference type="STRING" id="29491.GCA_000820065_01784"/>
<dbReference type="GeneID" id="97859171"/>
<dbReference type="KEGG" id="asa:ASA_0708"/>
<dbReference type="eggNOG" id="COG0238">
    <property type="taxonomic scope" value="Bacteria"/>
</dbReference>
<dbReference type="HOGENOM" id="CLU_148710_2_2_6"/>
<dbReference type="Proteomes" id="UP000000225">
    <property type="component" value="Chromosome"/>
</dbReference>
<dbReference type="GO" id="GO:0022627">
    <property type="term" value="C:cytosolic small ribosomal subunit"/>
    <property type="evidence" value="ECO:0007669"/>
    <property type="project" value="TreeGrafter"/>
</dbReference>
<dbReference type="GO" id="GO:0070181">
    <property type="term" value="F:small ribosomal subunit rRNA binding"/>
    <property type="evidence" value="ECO:0007669"/>
    <property type="project" value="TreeGrafter"/>
</dbReference>
<dbReference type="GO" id="GO:0003735">
    <property type="term" value="F:structural constituent of ribosome"/>
    <property type="evidence" value="ECO:0007669"/>
    <property type="project" value="InterPro"/>
</dbReference>
<dbReference type="GO" id="GO:0006412">
    <property type="term" value="P:translation"/>
    <property type="evidence" value="ECO:0007669"/>
    <property type="project" value="UniProtKB-UniRule"/>
</dbReference>
<dbReference type="FunFam" id="4.10.640.10:FF:000001">
    <property type="entry name" value="30S ribosomal protein S18"/>
    <property type="match status" value="1"/>
</dbReference>
<dbReference type="Gene3D" id="4.10.640.10">
    <property type="entry name" value="Ribosomal protein S18"/>
    <property type="match status" value="1"/>
</dbReference>
<dbReference type="HAMAP" id="MF_00270">
    <property type="entry name" value="Ribosomal_bS18"/>
    <property type="match status" value="1"/>
</dbReference>
<dbReference type="InterPro" id="IPR001648">
    <property type="entry name" value="Ribosomal_bS18"/>
</dbReference>
<dbReference type="InterPro" id="IPR018275">
    <property type="entry name" value="Ribosomal_bS18_CS"/>
</dbReference>
<dbReference type="InterPro" id="IPR036870">
    <property type="entry name" value="Ribosomal_bS18_sf"/>
</dbReference>
<dbReference type="NCBIfam" id="TIGR00165">
    <property type="entry name" value="S18"/>
    <property type="match status" value="1"/>
</dbReference>
<dbReference type="PANTHER" id="PTHR13479">
    <property type="entry name" value="30S RIBOSOMAL PROTEIN S18"/>
    <property type="match status" value="1"/>
</dbReference>
<dbReference type="PANTHER" id="PTHR13479:SF40">
    <property type="entry name" value="SMALL RIBOSOMAL SUBUNIT PROTEIN BS18M"/>
    <property type="match status" value="1"/>
</dbReference>
<dbReference type="Pfam" id="PF01084">
    <property type="entry name" value="Ribosomal_S18"/>
    <property type="match status" value="1"/>
</dbReference>
<dbReference type="PRINTS" id="PR00974">
    <property type="entry name" value="RIBOSOMALS18"/>
</dbReference>
<dbReference type="SUPFAM" id="SSF46911">
    <property type="entry name" value="Ribosomal protein S18"/>
    <property type="match status" value="1"/>
</dbReference>
<dbReference type="PROSITE" id="PS00057">
    <property type="entry name" value="RIBOSOMAL_S18"/>
    <property type="match status" value="1"/>
</dbReference>
<accession>A4SIZ8</accession>
<keyword id="KW-0687">Ribonucleoprotein</keyword>
<keyword id="KW-0689">Ribosomal protein</keyword>
<keyword id="KW-0694">RNA-binding</keyword>
<keyword id="KW-0699">rRNA-binding</keyword>
<name>RS18_AERS4</name>
<evidence type="ECO:0000255" key="1">
    <source>
        <dbReference type="HAMAP-Rule" id="MF_00270"/>
    </source>
</evidence>
<evidence type="ECO:0000305" key="2"/>
<proteinExistence type="inferred from homology"/>
<reference key="1">
    <citation type="journal article" date="2008" name="BMC Genomics">
        <title>The genome of Aeromonas salmonicida subsp. salmonicida A449: insights into the evolution of a fish pathogen.</title>
        <authorList>
            <person name="Reith M.E."/>
            <person name="Singh R.K."/>
            <person name="Curtis B."/>
            <person name="Boyd J.M."/>
            <person name="Bouevitch A."/>
            <person name="Kimball J."/>
            <person name="Munholland J."/>
            <person name="Murphy C."/>
            <person name="Sarty D."/>
            <person name="Williams J."/>
            <person name="Nash J.H."/>
            <person name="Johnson S.C."/>
            <person name="Brown L.L."/>
        </authorList>
    </citation>
    <scope>NUCLEOTIDE SEQUENCE [LARGE SCALE GENOMIC DNA]</scope>
    <source>
        <strain>A449</strain>
    </source>
</reference>
<sequence>MARYFRRRKFCRFTAENVTEIDYKDIVTLKNYVTESGKIVPSRITGTRAKYQRQLARAIKRARYLALLPYTDLHNK</sequence>
<gene>
    <name evidence="1" type="primary">rpsR</name>
    <name type="ordered locus">ASA_0708</name>
</gene>
<protein>
    <recommendedName>
        <fullName evidence="1">Small ribosomal subunit protein bS18</fullName>
    </recommendedName>
    <alternativeName>
        <fullName evidence="2">30S ribosomal protein S18</fullName>
    </alternativeName>
</protein>
<comment type="function">
    <text evidence="1">Binds as a heterodimer with protein bS6 to the central domain of the 16S rRNA, where it helps stabilize the platform of the 30S subunit.</text>
</comment>
<comment type="subunit">
    <text evidence="1">Part of the 30S ribosomal subunit. Forms a tight heterodimer with protein bS6.</text>
</comment>
<comment type="similarity">
    <text evidence="1">Belongs to the bacterial ribosomal protein bS18 family.</text>
</comment>
<organism>
    <name type="scientific">Aeromonas salmonicida (strain A449)</name>
    <dbReference type="NCBI Taxonomy" id="382245"/>
    <lineage>
        <taxon>Bacteria</taxon>
        <taxon>Pseudomonadati</taxon>
        <taxon>Pseudomonadota</taxon>
        <taxon>Gammaproteobacteria</taxon>
        <taxon>Aeromonadales</taxon>
        <taxon>Aeromonadaceae</taxon>
        <taxon>Aeromonas</taxon>
    </lineage>
</organism>